<accession>Q02970</accession>
<accession>Q967X3</accession>
<accession>Q9BLY5</accession>
<accession>Q9BMK1</accession>
<comment type="function">
    <text>Has been implicated in the acquisition, storage, and transport of lipids, and may be important to the organism since it is incapable of synthesizing most of its lipids de novo.</text>
</comment>
<comment type="developmental stage">
    <text>Expressed at the tegumental level in the protoscolices.</text>
</comment>
<comment type="domain">
    <text>Forms a beta-barrel structure that accommodates hydrophobic ligands in its interior.</text>
</comment>
<comment type="similarity">
    <text evidence="2">Belongs to the calycin superfamily. Fatty-acid binding protein (FABP) family.</text>
</comment>
<sequence length="133" mass="15065">MEAFLGTWKMEKSEGFDKIMERLGVDFVTRKMGNLVKPNLIVTDLGGGKYKMRSESTFKTTECSFKLGEKFKEVTPDSREVASLITVENGVMKHEQDDKTKVTYIERVVEGNELKATVKVDEVVCVRTYSKVA</sequence>
<protein>
    <recommendedName>
        <fullName>Fatty acid-binding protein homolog 1</fullName>
    </recommendedName>
    <alternativeName>
        <fullName>EgDf1</fullName>
    </alternativeName>
    <alternativeName>
        <fullName>EgFABP1</fullName>
    </alternativeName>
</protein>
<dbReference type="EMBL" id="X65947">
    <property type="protein sequence ID" value="CAA46765.2"/>
    <property type="molecule type" value="mRNA"/>
</dbReference>
<dbReference type="EMBL" id="AF321119">
    <property type="protein sequence ID" value="AAK12096.1"/>
    <property type="molecule type" value="Genomic_DNA"/>
</dbReference>
<dbReference type="EMBL" id="AY024340">
    <property type="protein sequence ID" value="AAK00579.1"/>
    <property type="molecule type" value="Genomic_DNA"/>
</dbReference>
<dbReference type="EMBL" id="AF359278">
    <property type="protein sequence ID" value="AAK51437.1"/>
    <property type="molecule type" value="mRNA"/>
</dbReference>
<dbReference type="PIR" id="S29600">
    <property type="entry name" value="S29600"/>
</dbReference>
<dbReference type="PDB" id="1O8V">
    <property type="method" value="X-ray"/>
    <property type="resolution" value="1.60 A"/>
    <property type="chains" value="A=1-133"/>
</dbReference>
<dbReference type="PDBsum" id="1O8V"/>
<dbReference type="SMR" id="Q02970"/>
<dbReference type="iPTMnet" id="Q02970"/>
<dbReference type="OrthoDB" id="412780at2759"/>
<dbReference type="EvolutionaryTrace" id="Q02970"/>
<dbReference type="Proteomes" id="UP000492820">
    <property type="component" value="Unplaced"/>
</dbReference>
<dbReference type="GO" id="GO:0008289">
    <property type="term" value="F:lipid binding"/>
    <property type="evidence" value="ECO:0007669"/>
    <property type="project" value="UniProtKB-KW"/>
</dbReference>
<dbReference type="FunFam" id="2.40.128.20:FF:000001">
    <property type="entry name" value="Fatty acid-binding protein, adipocyte"/>
    <property type="match status" value="1"/>
</dbReference>
<dbReference type="Gene3D" id="2.40.128.20">
    <property type="match status" value="1"/>
</dbReference>
<dbReference type="InterPro" id="IPR012674">
    <property type="entry name" value="Calycin"/>
</dbReference>
<dbReference type="InterPro" id="IPR000463">
    <property type="entry name" value="Fatty_acid-bd"/>
</dbReference>
<dbReference type="InterPro" id="IPR031259">
    <property type="entry name" value="ILBP"/>
</dbReference>
<dbReference type="InterPro" id="IPR000566">
    <property type="entry name" value="Lipocln_cytosolic_FA-bd_dom"/>
</dbReference>
<dbReference type="PANTHER" id="PTHR11955">
    <property type="entry name" value="FATTY ACID BINDING PROTEIN"/>
    <property type="match status" value="1"/>
</dbReference>
<dbReference type="Pfam" id="PF00061">
    <property type="entry name" value="Lipocalin"/>
    <property type="match status" value="1"/>
</dbReference>
<dbReference type="PRINTS" id="PR00178">
    <property type="entry name" value="FATTYACIDBP"/>
</dbReference>
<dbReference type="SUPFAM" id="SSF50814">
    <property type="entry name" value="Lipocalins"/>
    <property type="match status" value="1"/>
</dbReference>
<dbReference type="PROSITE" id="PS00214">
    <property type="entry name" value="FABP"/>
    <property type="match status" value="1"/>
</dbReference>
<evidence type="ECO:0000269" key="1">
    <source>
    </source>
</evidence>
<evidence type="ECO:0000305" key="2"/>
<evidence type="ECO:0007744" key="3">
    <source>
        <dbReference type="PDB" id="1O8V"/>
    </source>
</evidence>
<evidence type="ECO:0007829" key="4">
    <source>
        <dbReference type="PDB" id="1O8V"/>
    </source>
</evidence>
<reference key="1">
    <citation type="journal article" date="1993" name="Mol. Biochem. Parasitol.">
        <title>A developmentally regulated gene of Echinococcus granulosus codes for a 15.5-kilodalton polypeptide related to fatty acid binding proteins.</title>
        <authorList>
            <person name="Esteves A."/>
            <person name="Dallagiovanna B."/>
            <person name="Ehrlich R."/>
        </authorList>
    </citation>
    <scope>NUCLEOTIDE SEQUENCE [MRNA]</scope>
</reference>
<reference key="2">
    <citation type="submission" date="2000-06" db="EMBL/GenBank/DDBJ databases">
        <authorList>
            <person name="Esteves A."/>
        </authorList>
    </citation>
    <scope>SEQUENCE REVISION TO 76-84 AND 129</scope>
</reference>
<reference key="3">
    <citation type="submission" date="2001-01" db="EMBL/GenBank/DDBJ databases">
        <title>Echinococcus granulosus gene for fatty acid binding protein.</title>
        <authorList>
            <person name="Lu J.H."/>
            <person name="Guo Z.M."/>
            <person name="Yu X.B."/>
            <person name="Pan X.H."/>
            <person name="Chen J.B."/>
        </authorList>
    </citation>
    <scope>NUCLEOTIDE SEQUENCE</scope>
</reference>
<reference key="4">
    <citation type="submission" date="2001-03" db="EMBL/GenBank/DDBJ databases">
        <title>Cloning and identifying Echinococcus granulosus gene for fatty acid binding protein.</title>
        <authorList>
            <person name="Lu J.H."/>
            <person name="Yu X.B."/>
            <person name="Guo Z.M."/>
            <person name="Hu M."/>
        </authorList>
    </citation>
    <scope>NUCLEOTIDE SEQUENCE [MRNA]</scope>
</reference>
<reference key="5">
    <citation type="journal article" date="2003" name="Biochim. Biophys. Acta">
        <title>The crystal structure of Echinococcus granulosus fatty-acid-binding protein 1.</title>
        <authorList>
            <person name="Jakobsson E."/>
            <person name="Alvite G."/>
            <person name="Bergfors T."/>
            <person name="Esteves A."/>
            <person name="Kleywegt G.J."/>
        </authorList>
    </citation>
    <scope>X-RAY CRYSTALLOGRAPHY (1.6 ANGSTROMS) IN COMPLEX WITH PALMITATE</scope>
    <scope>ACETYLATION AT MET-1</scope>
</reference>
<feature type="chain" id="PRO_0000067351" description="Fatty acid-binding protein homolog 1">
    <location>
        <begin position="1"/>
        <end position="133"/>
    </location>
</feature>
<feature type="binding site" evidence="1 3">
    <location>
        <position position="107"/>
    </location>
    <ligand>
        <name>hexadecanoate</name>
        <dbReference type="ChEBI" id="CHEBI:7896"/>
    </ligand>
</feature>
<feature type="binding site" evidence="1 3">
    <location>
        <begin position="127"/>
        <end position="129"/>
    </location>
    <ligand>
        <name>hexadecanoate</name>
        <dbReference type="ChEBI" id="CHEBI:7896"/>
    </ligand>
</feature>
<feature type="modified residue" description="N-acetylmethionine" evidence="1">
    <location>
        <position position="1"/>
    </location>
</feature>
<feature type="sequence conflict" description="In Ref. 4; AAK51437." evidence="2" ref="4">
    <original>G</original>
    <variation>V</variation>
    <location>
        <position position="6"/>
    </location>
</feature>
<feature type="sequence conflict" description="In Ref. 3 and 4." evidence="2" ref="3 4">
    <original>A</original>
    <variation>T</variation>
    <location>
        <position position="82"/>
    </location>
</feature>
<feature type="sequence conflict" description="In Ref. 4; AAK51437." evidence="2" ref="4">
    <original>T</original>
    <variation>N</variation>
    <location>
        <position position="128"/>
    </location>
</feature>
<feature type="helix" evidence="4">
    <location>
        <begin position="2"/>
        <end position="4"/>
    </location>
</feature>
<feature type="strand" evidence="4">
    <location>
        <begin position="6"/>
        <end position="15"/>
    </location>
</feature>
<feature type="helix" evidence="4">
    <location>
        <begin position="16"/>
        <end position="23"/>
    </location>
</feature>
<feature type="helix" evidence="4">
    <location>
        <begin position="27"/>
        <end position="35"/>
    </location>
</feature>
<feature type="strand" evidence="4">
    <location>
        <begin position="39"/>
        <end position="46"/>
    </location>
</feature>
<feature type="strand" evidence="4">
    <location>
        <begin position="49"/>
        <end position="55"/>
    </location>
</feature>
<feature type="strand" evidence="4">
    <location>
        <begin position="60"/>
        <end position="66"/>
    </location>
</feature>
<feature type="strand" evidence="4">
    <location>
        <begin position="71"/>
        <end position="74"/>
    </location>
</feature>
<feature type="strand" evidence="4">
    <location>
        <begin position="80"/>
        <end position="88"/>
    </location>
</feature>
<feature type="strand" evidence="4">
    <location>
        <begin position="91"/>
        <end position="97"/>
    </location>
</feature>
<feature type="strand" evidence="4">
    <location>
        <begin position="102"/>
        <end position="110"/>
    </location>
</feature>
<feature type="strand" evidence="4">
    <location>
        <begin position="113"/>
        <end position="120"/>
    </location>
</feature>
<feature type="strand" evidence="4">
    <location>
        <begin position="123"/>
        <end position="133"/>
    </location>
</feature>
<organism>
    <name type="scientific">Echinococcus granulosus</name>
    <name type="common">Hydatid tapeworm</name>
    <dbReference type="NCBI Taxonomy" id="6210"/>
    <lineage>
        <taxon>Eukaryota</taxon>
        <taxon>Metazoa</taxon>
        <taxon>Spiralia</taxon>
        <taxon>Lophotrochozoa</taxon>
        <taxon>Platyhelminthes</taxon>
        <taxon>Cestoda</taxon>
        <taxon>Eucestoda</taxon>
        <taxon>Cyclophyllidea</taxon>
        <taxon>Taeniidae</taxon>
        <taxon>Echinococcus</taxon>
        <taxon>Echinococcus granulosus group</taxon>
    </lineage>
</organism>
<keyword id="KW-0002">3D-structure</keyword>
<keyword id="KW-0007">Acetylation</keyword>
<keyword id="KW-0446">Lipid-binding</keyword>
<keyword id="KW-0813">Transport</keyword>
<proteinExistence type="evidence at protein level"/>
<gene>
    <name type="primary">FABP1</name>
    <name type="synonym">DF1</name>
</gene>
<name>FABP1_ECHGR</name>